<keyword id="KW-0488">Methylation</keyword>
<keyword id="KW-1185">Reference proteome</keyword>
<keyword id="KW-0687">Ribonucleoprotein</keyword>
<keyword id="KW-0689">Ribosomal protein</keyword>
<keyword id="KW-0694">RNA-binding</keyword>
<keyword id="KW-0699">rRNA-binding</keyword>
<keyword id="KW-0820">tRNA-binding</keyword>
<sequence>MPTINQLVKTNRKAKTWKTKAPALNRGVNSLKKKVTKVSAPQKRGVCTRVATMTPKKPNSALRKYARVRLTNGMEVNAYIPGEGHNLQEHSVVLIRGGRVKDLPGVRYHIIRGTLDTQAVNNRKQSRSLYGAKRPKK</sequence>
<proteinExistence type="inferred from homology"/>
<feature type="chain" id="PRO_0000146253" description="Small ribosomal subunit protein uS12">
    <location>
        <begin position="1"/>
        <end position="137"/>
    </location>
</feature>
<feature type="modified residue" description="3-methylthioaspartic acid" evidence="1">
    <location>
        <position position="102"/>
    </location>
</feature>
<comment type="function">
    <text evidence="2">With S4 and S5 plays an important role in translational accuracy.</text>
</comment>
<comment type="function">
    <text evidence="2">Interacts with and stabilizes bases of the 16S rRNA that are involved in tRNA selection in the A site and with the mRNA backbone. Located at the interface of the 30S and 50S subunits, it traverses the body of the 30S subunit contacting proteins on the other side and probably holding the rRNA structure together. The combined cluster of proteins S8, S12 and S17 appears to hold together the shoulder and platform of the 30S subunit.</text>
</comment>
<comment type="subunit">
    <text evidence="2">Part of the 30S ribosomal subunit. Contacts proteins S8 and S17. May interact with IF1 in the 30S initiation complex.</text>
</comment>
<comment type="similarity">
    <text evidence="2">Belongs to the universal ribosomal protein uS12 family.</text>
</comment>
<accession>Q6F0J2</accession>
<dbReference type="EMBL" id="AE017263">
    <property type="protein sequence ID" value="AAT75981.1"/>
    <property type="molecule type" value="Genomic_DNA"/>
</dbReference>
<dbReference type="RefSeq" id="WP_011183521.1">
    <property type="nucleotide sequence ID" value="NC_006055.1"/>
</dbReference>
<dbReference type="RefSeq" id="YP_053865.1">
    <property type="nucleotide sequence ID" value="NC_006055.1"/>
</dbReference>
<dbReference type="SMR" id="Q6F0J2"/>
<dbReference type="STRING" id="265311.Mfl624"/>
<dbReference type="PaxDb" id="265311-Mfl624"/>
<dbReference type="EnsemblBacteria" id="AAT75981">
    <property type="protein sequence ID" value="AAT75981"/>
    <property type="gene ID" value="Mfl624"/>
</dbReference>
<dbReference type="GeneID" id="2897737"/>
<dbReference type="KEGG" id="mfl:Mfl624"/>
<dbReference type="PATRIC" id="fig|265311.5.peg.627"/>
<dbReference type="eggNOG" id="COG0048">
    <property type="taxonomic scope" value="Bacteria"/>
</dbReference>
<dbReference type="HOGENOM" id="CLU_104295_1_2_14"/>
<dbReference type="OrthoDB" id="9802366at2"/>
<dbReference type="Proteomes" id="UP000006647">
    <property type="component" value="Chromosome"/>
</dbReference>
<dbReference type="GO" id="GO:0015935">
    <property type="term" value="C:small ribosomal subunit"/>
    <property type="evidence" value="ECO:0007669"/>
    <property type="project" value="InterPro"/>
</dbReference>
<dbReference type="GO" id="GO:0019843">
    <property type="term" value="F:rRNA binding"/>
    <property type="evidence" value="ECO:0007669"/>
    <property type="project" value="UniProtKB-UniRule"/>
</dbReference>
<dbReference type="GO" id="GO:0003735">
    <property type="term" value="F:structural constituent of ribosome"/>
    <property type="evidence" value="ECO:0007669"/>
    <property type="project" value="InterPro"/>
</dbReference>
<dbReference type="GO" id="GO:0000049">
    <property type="term" value="F:tRNA binding"/>
    <property type="evidence" value="ECO:0007669"/>
    <property type="project" value="UniProtKB-UniRule"/>
</dbReference>
<dbReference type="GO" id="GO:0006412">
    <property type="term" value="P:translation"/>
    <property type="evidence" value="ECO:0007669"/>
    <property type="project" value="UniProtKB-UniRule"/>
</dbReference>
<dbReference type="CDD" id="cd03368">
    <property type="entry name" value="Ribosomal_S12"/>
    <property type="match status" value="1"/>
</dbReference>
<dbReference type="FunFam" id="2.40.50.140:FF:000001">
    <property type="entry name" value="30S ribosomal protein S12"/>
    <property type="match status" value="1"/>
</dbReference>
<dbReference type="Gene3D" id="2.40.50.140">
    <property type="entry name" value="Nucleic acid-binding proteins"/>
    <property type="match status" value="1"/>
</dbReference>
<dbReference type="HAMAP" id="MF_00403_B">
    <property type="entry name" value="Ribosomal_uS12_B"/>
    <property type="match status" value="1"/>
</dbReference>
<dbReference type="InterPro" id="IPR012340">
    <property type="entry name" value="NA-bd_OB-fold"/>
</dbReference>
<dbReference type="InterPro" id="IPR006032">
    <property type="entry name" value="Ribosomal_uS12"/>
</dbReference>
<dbReference type="InterPro" id="IPR005679">
    <property type="entry name" value="Ribosomal_uS12_bac"/>
</dbReference>
<dbReference type="NCBIfam" id="TIGR00981">
    <property type="entry name" value="rpsL_bact"/>
    <property type="match status" value="1"/>
</dbReference>
<dbReference type="PANTHER" id="PTHR11652">
    <property type="entry name" value="30S RIBOSOMAL PROTEIN S12 FAMILY MEMBER"/>
    <property type="match status" value="1"/>
</dbReference>
<dbReference type="Pfam" id="PF00164">
    <property type="entry name" value="Ribosom_S12_S23"/>
    <property type="match status" value="1"/>
</dbReference>
<dbReference type="PIRSF" id="PIRSF002133">
    <property type="entry name" value="Ribosomal_S12/S23"/>
    <property type="match status" value="1"/>
</dbReference>
<dbReference type="PRINTS" id="PR01034">
    <property type="entry name" value="RIBOSOMALS12"/>
</dbReference>
<dbReference type="SUPFAM" id="SSF50249">
    <property type="entry name" value="Nucleic acid-binding proteins"/>
    <property type="match status" value="1"/>
</dbReference>
<dbReference type="PROSITE" id="PS00055">
    <property type="entry name" value="RIBOSOMAL_S12"/>
    <property type="match status" value="1"/>
</dbReference>
<evidence type="ECO:0000250" key="1"/>
<evidence type="ECO:0000255" key="2">
    <source>
        <dbReference type="HAMAP-Rule" id="MF_00403"/>
    </source>
</evidence>
<evidence type="ECO:0000305" key="3"/>
<organism>
    <name type="scientific">Mesoplasma florum (strain ATCC 33453 / NBRC 100688 / NCTC 11704 / L1)</name>
    <name type="common">Acholeplasma florum</name>
    <dbReference type="NCBI Taxonomy" id="265311"/>
    <lineage>
        <taxon>Bacteria</taxon>
        <taxon>Bacillati</taxon>
        <taxon>Mycoplasmatota</taxon>
        <taxon>Mollicutes</taxon>
        <taxon>Entomoplasmatales</taxon>
        <taxon>Entomoplasmataceae</taxon>
        <taxon>Mesoplasma</taxon>
    </lineage>
</organism>
<protein>
    <recommendedName>
        <fullName evidence="2">Small ribosomal subunit protein uS12</fullName>
    </recommendedName>
    <alternativeName>
        <fullName evidence="3">30S ribosomal protein S12</fullName>
    </alternativeName>
</protein>
<gene>
    <name evidence="2" type="primary">rpsL</name>
    <name type="ordered locus">Mfl624</name>
</gene>
<reference key="1">
    <citation type="submission" date="2004-06" db="EMBL/GenBank/DDBJ databases">
        <authorList>
            <person name="Birren B.W."/>
            <person name="Stange-Thomann N."/>
            <person name="Hafez N."/>
            <person name="DeCaprio D."/>
            <person name="Fisher S."/>
            <person name="Butler J."/>
            <person name="Elkins T."/>
            <person name="Kodira C.D."/>
            <person name="Major J."/>
            <person name="Wang S."/>
            <person name="Nicol R."/>
            <person name="Nusbaum C."/>
        </authorList>
    </citation>
    <scope>NUCLEOTIDE SEQUENCE [LARGE SCALE GENOMIC DNA]</scope>
    <source>
        <strain>ATCC 33453 / NBRC 100688 / NCTC 11704 / L1</strain>
    </source>
</reference>
<name>RS12_MESFL</name>